<protein>
    <recommendedName>
        <fullName evidence="4">Staphyloferrin A transporter</fullName>
    </recommendedName>
</protein>
<sequence>MTKYFFSSSFLLFLGNWIGQIGLNWFVLTTYHNAVYLGIVNFCRLVPILLLSVWAGAIADKYDKGRLLRITISSSFLVTAILCVLTYSFTAIPISVIIIYATLRGILSAVETPLRQAILPDLSDKISTTQAVSFHSFIINICRSIGPAIAGVILAVYHAPTTFLAQAICYFIAVLLCLPLHFKVTKIPEDASRYMPLKVIIDYFKLHMEGRQIFITSLLIMATGFSYTTLLPVLTNKVFPGKSEIFGIAMTMCAIGGIIATLVLPKVLKYIGMVNMYYLSSFLFGIALLGVVFHNIVIMFICITLIGLFSQWARTTNRVYFQNNVKDYERGKVLSIIMMDRGMIPLGSLLMSICADVFGIVRTFSIMGISTICITMVFYFINRKLKLKLEESNHGIS</sequence>
<name>SFAA_STAA8</name>
<reference key="1">
    <citation type="book" date="2006" name="Gram positive pathogens, 2nd edition">
        <title>The Staphylococcus aureus NCTC 8325 genome.</title>
        <editorList>
            <person name="Fischetti V."/>
            <person name="Novick R."/>
            <person name="Ferretti J."/>
            <person name="Portnoy D."/>
            <person name="Rood J."/>
        </editorList>
        <authorList>
            <person name="Gillaspy A.F."/>
            <person name="Worrell V."/>
            <person name="Orvis J."/>
            <person name="Roe B.A."/>
            <person name="Dyer D.W."/>
            <person name="Iandolo J.J."/>
        </authorList>
    </citation>
    <scope>NUCLEOTIDE SEQUENCE [LARGE SCALE GENOMIC DNA]</scope>
    <source>
        <strain>NCTC 8325 / PS 47</strain>
    </source>
</reference>
<reference key="2">
    <citation type="journal article" date="2015" name="FEBS Lett.">
        <title>Involvement of major facilitator superfamily proteins SfaA and SbnD in staphyloferrin secretion in Staphylococcus aureus.</title>
        <authorList>
            <person name="Hannauer M."/>
            <person name="Sheldon J.R."/>
            <person name="Heinrichs D.E."/>
        </authorList>
    </citation>
    <scope>FUNCTION</scope>
    <scope>DISRUPTION PHENOTYPE</scope>
</reference>
<organism>
    <name type="scientific">Staphylococcus aureus (strain NCTC 8325 / PS 47)</name>
    <dbReference type="NCBI Taxonomy" id="93061"/>
    <lineage>
        <taxon>Bacteria</taxon>
        <taxon>Bacillati</taxon>
        <taxon>Bacillota</taxon>
        <taxon>Bacilli</taxon>
        <taxon>Bacillales</taxon>
        <taxon>Staphylococcaceae</taxon>
        <taxon>Staphylococcus</taxon>
    </lineage>
</organism>
<comment type="function">
    <text evidence="2">Involved in staphyloferrin A secretion.</text>
</comment>
<comment type="subcellular location">
    <subcellularLocation>
        <location evidence="4">Cell membrane</location>
        <topology evidence="1">Multi-pass membrane protein</topology>
    </subcellularLocation>
</comment>
<comment type="disruption phenotype">
    <text evidence="2">Deletion of the gene impacts growth in iron-depleted media. Mutant accumulates staphyloferrin A in the cytoplasm. Does not affect staphyloferrin B levels.</text>
</comment>
<comment type="similarity">
    <text evidence="4">Belongs to the major facilitator superfamily.</text>
</comment>
<dbReference type="EMBL" id="CP000253">
    <property type="protein sequence ID" value="ABD31457.1"/>
    <property type="molecule type" value="Genomic_DNA"/>
</dbReference>
<dbReference type="RefSeq" id="WP_000170403.1">
    <property type="nucleotide sequence ID" value="NZ_LS483365.1"/>
</dbReference>
<dbReference type="RefSeq" id="YP_500904.1">
    <property type="nucleotide sequence ID" value="NC_007795.1"/>
</dbReference>
<dbReference type="SMR" id="Q2FW71"/>
<dbReference type="STRING" id="93061.SAOUHSC_02435"/>
<dbReference type="PaxDb" id="1280-SAXN108_2428"/>
<dbReference type="GeneID" id="3919000"/>
<dbReference type="KEGG" id="sao:SAOUHSC_02435"/>
<dbReference type="PATRIC" id="fig|93061.5.peg.2196"/>
<dbReference type="eggNOG" id="COG2814">
    <property type="taxonomic scope" value="Bacteria"/>
</dbReference>
<dbReference type="HOGENOM" id="CLU_034180_11_2_9"/>
<dbReference type="OrthoDB" id="9775268at2"/>
<dbReference type="Proteomes" id="UP000008816">
    <property type="component" value="Chromosome"/>
</dbReference>
<dbReference type="GO" id="GO:0005886">
    <property type="term" value="C:plasma membrane"/>
    <property type="evidence" value="ECO:0000318"/>
    <property type="project" value="GO_Central"/>
</dbReference>
<dbReference type="GO" id="GO:0015562">
    <property type="term" value="F:efflux transmembrane transporter activity"/>
    <property type="evidence" value="ECO:0000318"/>
    <property type="project" value="GO_Central"/>
</dbReference>
<dbReference type="GO" id="GO:0046677">
    <property type="term" value="P:response to antibiotic"/>
    <property type="evidence" value="ECO:0000318"/>
    <property type="project" value="GO_Central"/>
</dbReference>
<dbReference type="CDD" id="cd06173">
    <property type="entry name" value="MFS_MefA_like"/>
    <property type="match status" value="1"/>
</dbReference>
<dbReference type="Gene3D" id="1.20.1250.20">
    <property type="entry name" value="MFS general substrate transporter like domains"/>
    <property type="match status" value="1"/>
</dbReference>
<dbReference type="InterPro" id="IPR020846">
    <property type="entry name" value="MFS_dom"/>
</dbReference>
<dbReference type="InterPro" id="IPR036259">
    <property type="entry name" value="MFS_trans_sf"/>
</dbReference>
<dbReference type="InterPro" id="IPR010290">
    <property type="entry name" value="TM_effector"/>
</dbReference>
<dbReference type="PANTHER" id="PTHR23513">
    <property type="entry name" value="INTEGRAL MEMBRANE EFFLUX PROTEIN-RELATED"/>
    <property type="match status" value="1"/>
</dbReference>
<dbReference type="PANTHER" id="PTHR23513:SF11">
    <property type="entry name" value="STAPHYLOFERRIN A TRANSPORTER"/>
    <property type="match status" value="1"/>
</dbReference>
<dbReference type="Pfam" id="PF05977">
    <property type="entry name" value="MFS_3"/>
    <property type="match status" value="1"/>
</dbReference>
<dbReference type="SUPFAM" id="SSF103473">
    <property type="entry name" value="MFS general substrate transporter"/>
    <property type="match status" value="1"/>
</dbReference>
<dbReference type="PROSITE" id="PS50850">
    <property type="entry name" value="MFS"/>
    <property type="match status" value="1"/>
</dbReference>
<feature type="chain" id="PRO_0000447124" description="Staphyloferrin A transporter">
    <location>
        <begin position="1"/>
        <end position="397"/>
    </location>
</feature>
<feature type="transmembrane region" description="Helical" evidence="1">
    <location>
        <begin position="10"/>
        <end position="30"/>
    </location>
</feature>
<feature type="transmembrane region" description="Helical" evidence="1">
    <location>
        <begin position="39"/>
        <end position="59"/>
    </location>
</feature>
<feature type="transmembrane region" description="Helical" evidence="1">
    <location>
        <begin position="67"/>
        <end position="87"/>
    </location>
</feature>
<feature type="transmembrane region" description="Helical" evidence="1">
    <location>
        <begin position="93"/>
        <end position="110"/>
    </location>
</feature>
<feature type="transmembrane region" description="Helical" evidence="1">
    <location>
        <begin position="137"/>
        <end position="157"/>
    </location>
</feature>
<feature type="transmembrane region" description="Helical" evidence="1">
    <location>
        <begin position="162"/>
        <end position="182"/>
    </location>
</feature>
<feature type="transmembrane region" description="Helical" evidence="1">
    <location>
        <begin position="213"/>
        <end position="233"/>
    </location>
</feature>
<feature type="transmembrane region" description="Helical" evidence="1">
    <location>
        <begin position="245"/>
        <end position="265"/>
    </location>
</feature>
<feature type="transmembrane region" description="Helical" evidence="1">
    <location>
        <begin position="271"/>
        <end position="292"/>
    </location>
</feature>
<feature type="transmembrane region" description="Helical" evidence="1">
    <location>
        <begin position="296"/>
        <end position="313"/>
    </location>
</feature>
<feature type="transmembrane region" description="Helical" evidence="1">
    <location>
        <begin position="333"/>
        <end position="353"/>
    </location>
</feature>
<feature type="transmembrane region" description="Helical" evidence="1">
    <location>
        <begin position="358"/>
        <end position="378"/>
    </location>
</feature>
<proteinExistence type="inferred from homology"/>
<gene>
    <name evidence="3" type="primary">sfaA</name>
    <name evidence="5" type="ordered locus">SAOUHSC_02435</name>
</gene>
<accession>Q2FW71</accession>
<keyword id="KW-1003">Cell membrane</keyword>
<keyword id="KW-0472">Membrane</keyword>
<keyword id="KW-1185">Reference proteome</keyword>
<keyword id="KW-0812">Transmembrane</keyword>
<keyword id="KW-1133">Transmembrane helix</keyword>
<keyword id="KW-0813">Transport</keyword>
<evidence type="ECO:0000255" key="1"/>
<evidence type="ECO:0000269" key="2">
    <source>
    </source>
</evidence>
<evidence type="ECO:0000303" key="3">
    <source>
    </source>
</evidence>
<evidence type="ECO:0000305" key="4"/>
<evidence type="ECO:0000312" key="5">
    <source>
        <dbReference type="EMBL" id="ABD31457.1"/>
    </source>
</evidence>